<keyword id="KW-0150">Chloroplast</keyword>
<keyword id="KW-0472">Membrane</keyword>
<keyword id="KW-0597">Phosphoprotein</keyword>
<keyword id="KW-0602">Photosynthesis</keyword>
<keyword id="KW-0604">Photosystem II</keyword>
<keyword id="KW-0934">Plastid</keyword>
<keyword id="KW-0793">Thylakoid</keyword>
<keyword id="KW-0812">Transmembrane</keyword>
<keyword id="KW-1133">Transmembrane helix</keyword>
<geneLocation type="chloroplast"/>
<organism>
    <name type="scientific">Chaetosphaeridium globosum</name>
    <name type="common">Charophycean green alga</name>
    <name type="synonym">Herposteiron globosum</name>
    <dbReference type="NCBI Taxonomy" id="96477"/>
    <lineage>
        <taxon>Eukaryota</taxon>
        <taxon>Viridiplantae</taxon>
        <taxon>Streptophyta</taxon>
        <taxon>Coleochaetophyceae</taxon>
        <taxon>Coleochaetales</taxon>
        <taxon>Chaetosphaeridiaceae</taxon>
        <taxon>Chaetosphaeridium</taxon>
    </lineage>
</organism>
<feature type="initiator methionine" description="Removed" evidence="1">
    <location>
        <position position="1"/>
    </location>
</feature>
<feature type="chain" id="PRO_0000070501" description="Photosystem II reaction center protein H">
    <location>
        <begin position="2"/>
        <end position="74"/>
    </location>
</feature>
<feature type="transmembrane region" description="Helical" evidence="2">
    <location>
        <begin position="41"/>
        <end position="61"/>
    </location>
</feature>
<feature type="modified residue" description="Phosphothreonine" evidence="2">
    <location>
        <position position="3"/>
    </location>
</feature>
<feature type="modified residue" description="Phosphothreonine" evidence="2">
    <location>
        <position position="5"/>
    </location>
</feature>
<protein>
    <recommendedName>
        <fullName evidence="2">Photosystem II reaction center protein H</fullName>
        <shortName evidence="2">PSII-H</shortName>
    </recommendedName>
    <alternativeName>
        <fullName evidence="2">Photosystem II 10 kDa phosphoprotein</fullName>
    </alternativeName>
</protein>
<gene>
    <name evidence="2" type="primary">psbH</name>
</gene>
<comment type="function">
    <text evidence="2">One of the components of the core complex of photosystem II (PSII), required for its stability and/or assembly. PSII is a light-driven water:plastoquinone oxidoreductase that uses light energy to abstract electrons from H(2)O, generating O(2) and a proton gradient subsequently used for ATP formation. It consists of a core antenna complex that captures photons, and an electron transfer chain that converts photonic excitation into a charge separation.</text>
</comment>
<comment type="subunit">
    <text evidence="2">PSII is composed of 1 copy each of membrane proteins PsbA, PsbB, PsbC, PsbD, PsbE, PsbF, PsbH, PsbI, PsbJ, PsbK, PsbL, PsbM, PsbT, PsbX, PsbY, PsbZ, Psb30/Ycf12, at least 3 peripheral proteins of the oxygen-evolving complex and a large number of cofactors. It forms dimeric complexes.</text>
</comment>
<comment type="subcellular location">
    <subcellularLocation>
        <location evidence="2">Plastid</location>
        <location evidence="2">Chloroplast thylakoid membrane</location>
        <topology evidence="2">Single-pass membrane protein</topology>
    </subcellularLocation>
</comment>
<comment type="PTM">
    <text evidence="2">Phosphorylation is a light-dependent reaction catalyzed by a membrane-bound kinase; phosphorylation occurs on Thr residue(s) in the N-terminus of the protein.</text>
</comment>
<comment type="similarity">
    <text evidence="2">Belongs to the PsbH family.</text>
</comment>
<accession>Q8M9Z3</accession>
<evidence type="ECO:0000250" key="1">
    <source>
        <dbReference type="UniProtKB" id="P56780"/>
    </source>
</evidence>
<evidence type="ECO:0000255" key="2">
    <source>
        <dbReference type="HAMAP-Rule" id="MF_00752"/>
    </source>
</evidence>
<reference key="1">
    <citation type="journal article" date="2002" name="Proc. Natl. Acad. Sci. U.S.A.">
        <title>The chloroplast and mitochondrial genome sequences of the charophyte Chaetosphaeridium globosum: insights into the timing of the events that restructured organelle DNAs within the green algal lineage that led to land plants.</title>
        <authorList>
            <person name="Turmel M."/>
            <person name="Otis C."/>
            <person name="Lemieux C."/>
        </authorList>
    </citation>
    <scope>NUCLEOTIDE SEQUENCE [LARGE SCALE GENOMIC DNA]</scope>
    <source>
        <strain>M1311</strain>
    </source>
</reference>
<proteinExistence type="inferred from homology"/>
<sequence length="74" mass="8028">MATKTIDNSIKLKGRRSAVGDILKPLNSEYGKVAPGWGTTVLMGVFMALFAVFLVIILEIYNSSVLLDGIPVSW</sequence>
<name>PSBH_CHAGL</name>
<dbReference type="EMBL" id="AF494278">
    <property type="protein sequence ID" value="AAM96544.1"/>
    <property type="molecule type" value="Genomic_DNA"/>
</dbReference>
<dbReference type="RefSeq" id="NP_683793.1">
    <property type="nucleotide sequence ID" value="NC_004115.1"/>
</dbReference>
<dbReference type="SMR" id="Q8M9Z3"/>
<dbReference type="GeneID" id="860700"/>
<dbReference type="GO" id="GO:0009535">
    <property type="term" value="C:chloroplast thylakoid membrane"/>
    <property type="evidence" value="ECO:0007669"/>
    <property type="project" value="UniProtKB-SubCell"/>
</dbReference>
<dbReference type="GO" id="GO:0009523">
    <property type="term" value="C:photosystem II"/>
    <property type="evidence" value="ECO:0007669"/>
    <property type="project" value="UniProtKB-KW"/>
</dbReference>
<dbReference type="GO" id="GO:0042301">
    <property type="term" value="F:phosphate ion binding"/>
    <property type="evidence" value="ECO:0007669"/>
    <property type="project" value="InterPro"/>
</dbReference>
<dbReference type="GO" id="GO:0015979">
    <property type="term" value="P:photosynthesis"/>
    <property type="evidence" value="ECO:0007669"/>
    <property type="project" value="UniProtKB-UniRule"/>
</dbReference>
<dbReference type="GO" id="GO:0050821">
    <property type="term" value="P:protein stabilization"/>
    <property type="evidence" value="ECO:0007669"/>
    <property type="project" value="InterPro"/>
</dbReference>
<dbReference type="Gene3D" id="1.20.5.880">
    <property type="entry name" value="Photosystem II reaction center protein H"/>
    <property type="match status" value="1"/>
</dbReference>
<dbReference type="HAMAP" id="MF_00752">
    <property type="entry name" value="PSII_PsbH"/>
    <property type="match status" value="1"/>
</dbReference>
<dbReference type="InterPro" id="IPR001056">
    <property type="entry name" value="PSII_PsbH"/>
</dbReference>
<dbReference type="InterPro" id="IPR036863">
    <property type="entry name" value="PSII_PsbH_sf"/>
</dbReference>
<dbReference type="NCBIfam" id="NF002728">
    <property type="entry name" value="PRK02624.1"/>
    <property type="match status" value="1"/>
</dbReference>
<dbReference type="PANTHER" id="PTHR34469">
    <property type="entry name" value="PHOTOSYSTEM II REACTION CENTER PROTEIN H"/>
    <property type="match status" value="1"/>
</dbReference>
<dbReference type="PANTHER" id="PTHR34469:SF4">
    <property type="entry name" value="PHOTOSYSTEM II REACTION CENTER PROTEIN H"/>
    <property type="match status" value="1"/>
</dbReference>
<dbReference type="Pfam" id="PF00737">
    <property type="entry name" value="PsbH"/>
    <property type="match status" value="1"/>
</dbReference>
<dbReference type="SUPFAM" id="SSF161025">
    <property type="entry name" value="Photosystem II 10 kDa phosphoprotein PsbH"/>
    <property type="match status" value="1"/>
</dbReference>